<keyword id="KW-0285">Flavoprotein</keyword>
<keyword id="KW-0288">FMN</keyword>
<keyword id="KW-0560">Oxidoreductase</keyword>
<keyword id="KW-0664">Pyridoxine biosynthesis</keyword>
<keyword id="KW-1185">Reference proteome</keyword>
<sequence length="222" mass="25197">MSADPTLIPASPSEDDYVRQVREATPPPLLSEEDPFALFAEWLEEAGKKEPNDPNAMTVSTVDADGMPDSRMVLLKDFDARGFVFYTNTQSAKGQELNAHPKAALLFHWKSLRRQVRIRGTVEPVTEAEADAYFASRARHSQIGAWASDQSQPLPDRHALEKRVAEMGLKFGLGKVPRPPHWSGYRITPVTIEFWRDRPFRLHERLVFDRADGGWTTKRLFP</sequence>
<gene>
    <name evidence="1" type="primary">pdxH</name>
    <name type="ordered locus">CC_0918</name>
</gene>
<organism>
    <name type="scientific">Caulobacter vibrioides (strain ATCC 19089 / CIP 103742 / CB 15)</name>
    <name type="common">Caulobacter crescentus</name>
    <dbReference type="NCBI Taxonomy" id="190650"/>
    <lineage>
        <taxon>Bacteria</taxon>
        <taxon>Pseudomonadati</taxon>
        <taxon>Pseudomonadota</taxon>
        <taxon>Alphaproteobacteria</taxon>
        <taxon>Caulobacterales</taxon>
        <taxon>Caulobacteraceae</taxon>
        <taxon>Caulobacter</taxon>
    </lineage>
</organism>
<feature type="chain" id="PRO_0000167697" description="Pyridoxine/pyridoxamine 5'-phosphate oxidase">
    <location>
        <begin position="1"/>
        <end position="222"/>
    </location>
</feature>
<feature type="binding site" evidence="1">
    <location>
        <begin position="71"/>
        <end position="76"/>
    </location>
    <ligand>
        <name>FMN</name>
        <dbReference type="ChEBI" id="CHEBI:58210"/>
    </ligand>
</feature>
<feature type="binding site" evidence="1">
    <location>
        <position position="76"/>
    </location>
    <ligand>
        <name>substrate</name>
    </ligand>
</feature>
<feature type="binding site" evidence="1">
    <location>
        <begin position="86"/>
        <end position="87"/>
    </location>
    <ligand>
        <name>FMN</name>
        <dbReference type="ChEBI" id="CHEBI:58210"/>
    </ligand>
</feature>
<feature type="binding site" evidence="1">
    <location>
        <position position="93"/>
    </location>
    <ligand>
        <name>FMN</name>
        <dbReference type="ChEBI" id="CHEBI:58210"/>
    </ligand>
</feature>
<feature type="binding site" evidence="1">
    <location>
        <position position="115"/>
    </location>
    <ligand>
        <name>FMN</name>
        <dbReference type="ChEBI" id="CHEBI:58210"/>
    </ligand>
</feature>
<feature type="binding site" evidence="1">
    <location>
        <position position="133"/>
    </location>
    <ligand>
        <name>substrate</name>
    </ligand>
</feature>
<feature type="binding site" evidence="1">
    <location>
        <position position="137"/>
    </location>
    <ligand>
        <name>substrate</name>
    </ligand>
</feature>
<feature type="binding site" evidence="1">
    <location>
        <position position="141"/>
    </location>
    <ligand>
        <name>substrate</name>
    </ligand>
</feature>
<feature type="binding site" evidence="1">
    <location>
        <begin position="150"/>
        <end position="151"/>
    </location>
    <ligand>
        <name>FMN</name>
        <dbReference type="ChEBI" id="CHEBI:58210"/>
    </ligand>
</feature>
<feature type="binding site" evidence="1">
    <location>
        <position position="195"/>
    </location>
    <ligand>
        <name>FMN</name>
        <dbReference type="ChEBI" id="CHEBI:58210"/>
    </ligand>
</feature>
<feature type="binding site" evidence="1">
    <location>
        <begin position="201"/>
        <end position="203"/>
    </location>
    <ligand>
        <name>substrate</name>
    </ligand>
</feature>
<feature type="binding site" evidence="1">
    <location>
        <position position="205"/>
    </location>
    <ligand>
        <name>FMN</name>
        <dbReference type="ChEBI" id="CHEBI:58210"/>
    </ligand>
</feature>
<accession>Q9A9Q6</accession>
<proteinExistence type="inferred from homology"/>
<dbReference type="EC" id="1.4.3.5" evidence="1"/>
<dbReference type="EMBL" id="AE005673">
    <property type="protein sequence ID" value="AAK22902.1"/>
    <property type="molecule type" value="Genomic_DNA"/>
</dbReference>
<dbReference type="PIR" id="B87363">
    <property type="entry name" value="B87363"/>
</dbReference>
<dbReference type="RefSeq" id="NP_419734.1">
    <property type="nucleotide sequence ID" value="NC_002696.2"/>
</dbReference>
<dbReference type="RefSeq" id="WP_010918802.1">
    <property type="nucleotide sequence ID" value="NC_002696.2"/>
</dbReference>
<dbReference type="SMR" id="Q9A9Q6"/>
<dbReference type="STRING" id="190650.CC_0918"/>
<dbReference type="EnsemblBacteria" id="AAK22902">
    <property type="protein sequence ID" value="AAK22902"/>
    <property type="gene ID" value="CC_0918"/>
</dbReference>
<dbReference type="KEGG" id="ccr:CC_0918"/>
<dbReference type="PATRIC" id="fig|190650.5.peg.931"/>
<dbReference type="eggNOG" id="COG0259">
    <property type="taxonomic scope" value="Bacteria"/>
</dbReference>
<dbReference type="HOGENOM" id="CLU_032263_2_3_5"/>
<dbReference type="BioCyc" id="CAULO:CC0918-MONOMER"/>
<dbReference type="UniPathway" id="UPA01068">
    <property type="reaction ID" value="UER00304"/>
</dbReference>
<dbReference type="UniPathway" id="UPA01068">
    <property type="reaction ID" value="UER00305"/>
</dbReference>
<dbReference type="Proteomes" id="UP000001816">
    <property type="component" value="Chromosome"/>
</dbReference>
<dbReference type="GO" id="GO:0010181">
    <property type="term" value="F:FMN binding"/>
    <property type="evidence" value="ECO:0007669"/>
    <property type="project" value="UniProtKB-UniRule"/>
</dbReference>
<dbReference type="GO" id="GO:0004733">
    <property type="term" value="F:pyridoxamine phosphate oxidase activity"/>
    <property type="evidence" value="ECO:0007669"/>
    <property type="project" value="UniProtKB-UniRule"/>
</dbReference>
<dbReference type="GO" id="GO:0008615">
    <property type="term" value="P:pyridoxine biosynthetic process"/>
    <property type="evidence" value="ECO:0007669"/>
    <property type="project" value="UniProtKB-KW"/>
</dbReference>
<dbReference type="Gene3D" id="2.30.110.10">
    <property type="entry name" value="Electron Transport, Fmn-binding Protein, Chain A"/>
    <property type="match status" value="1"/>
</dbReference>
<dbReference type="HAMAP" id="MF_01629">
    <property type="entry name" value="PdxH"/>
    <property type="match status" value="1"/>
</dbReference>
<dbReference type="InterPro" id="IPR000659">
    <property type="entry name" value="Pyridox_Oxase"/>
</dbReference>
<dbReference type="InterPro" id="IPR019740">
    <property type="entry name" value="Pyridox_Oxase_CS"/>
</dbReference>
<dbReference type="InterPro" id="IPR011576">
    <property type="entry name" value="Pyridox_Oxase_N"/>
</dbReference>
<dbReference type="InterPro" id="IPR019576">
    <property type="entry name" value="Pyridoxamine_oxidase_dimer_C"/>
</dbReference>
<dbReference type="InterPro" id="IPR012349">
    <property type="entry name" value="Split_barrel_FMN-bd"/>
</dbReference>
<dbReference type="NCBIfam" id="TIGR00558">
    <property type="entry name" value="pdxH"/>
    <property type="match status" value="1"/>
</dbReference>
<dbReference type="NCBIfam" id="NF004231">
    <property type="entry name" value="PRK05679.1"/>
    <property type="match status" value="1"/>
</dbReference>
<dbReference type="PANTHER" id="PTHR10851:SF0">
    <property type="entry name" value="PYRIDOXINE-5'-PHOSPHATE OXIDASE"/>
    <property type="match status" value="1"/>
</dbReference>
<dbReference type="PANTHER" id="PTHR10851">
    <property type="entry name" value="PYRIDOXINE-5-PHOSPHATE OXIDASE"/>
    <property type="match status" value="1"/>
</dbReference>
<dbReference type="Pfam" id="PF10590">
    <property type="entry name" value="PNP_phzG_C"/>
    <property type="match status" value="1"/>
</dbReference>
<dbReference type="Pfam" id="PF01243">
    <property type="entry name" value="PNPOx_N"/>
    <property type="match status" value="1"/>
</dbReference>
<dbReference type="PIRSF" id="PIRSF000190">
    <property type="entry name" value="Pyd_amn-ph_oxd"/>
    <property type="match status" value="1"/>
</dbReference>
<dbReference type="SUPFAM" id="SSF50475">
    <property type="entry name" value="FMN-binding split barrel"/>
    <property type="match status" value="1"/>
</dbReference>
<dbReference type="PROSITE" id="PS01064">
    <property type="entry name" value="PYRIDOX_OXIDASE"/>
    <property type="match status" value="1"/>
</dbReference>
<reference key="1">
    <citation type="journal article" date="2001" name="Proc. Natl. Acad. Sci. U.S.A.">
        <title>Complete genome sequence of Caulobacter crescentus.</title>
        <authorList>
            <person name="Nierman W.C."/>
            <person name="Feldblyum T.V."/>
            <person name="Laub M.T."/>
            <person name="Paulsen I.T."/>
            <person name="Nelson K.E."/>
            <person name="Eisen J.A."/>
            <person name="Heidelberg J.F."/>
            <person name="Alley M.R.K."/>
            <person name="Ohta N."/>
            <person name="Maddock J.R."/>
            <person name="Potocka I."/>
            <person name="Nelson W.C."/>
            <person name="Newton A."/>
            <person name="Stephens C."/>
            <person name="Phadke N.D."/>
            <person name="Ely B."/>
            <person name="DeBoy R.T."/>
            <person name="Dodson R.J."/>
            <person name="Durkin A.S."/>
            <person name="Gwinn M.L."/>
            <person name="Haft D.H."/>
            <person name="Kolonay J.F."/>
            <person name="Smit J."/>
            <person name="Craven M.B."/>
            <person name="Khouri H.M."/>
            <person name="Shetty J."/>
            <person name="Berry K.J."/>
            <person name="Utterback T.R."/>
            <person name="Tran K."/>
            <person name="Wolf A.M."/>
            <person name="Vamathevan J.J."/>
            <person name="Ermolaeva M.D."/>
            <person name="White O."/>
            <person name="Salzberg S.L."/>
            <person name="Venter J.C."/>
            <person name="Shapiro L."/>
            <person name="Fraser C.M."/>
        </authorList>
    </citation>
    <scope>NUCLEOTIDE SEQUENCE [LARGE SCALE GENOMIC DNA]</scope>
    <source>
        <strain>ATCC 19089 / CIP 103742 / CB 15</strain>
    </source>
</reference>
<evidence type="ECO:0000255" key="1">
    <source>
        <dbReference type="HAMAP-Rule" id="MF_01629"/>
    </source>
</evidence>
<protein>
    <recommendedName>
        <fullName evidence="1">Pyridoxine/pyridoxamine 5'-phosphate oxidase</fullName>
        <ecNumber evidence="1">1.4.3.5</ecNumber>
    </recommendedName>
    <alternativeName>
        <fullName evidence="1">PNP/PMP oxidase</fullName>
        <shortName evidence="1">PNPOx</shortName>
    </alternativeName>
    <alternativeName>
        <fullName evidence="1">Pyridoxal 5'-phosphate synthase</fullName>
    </alternativeName>
</protein>
<comment type="function">
    <text evidence="1">Catalyzes the oxidation of either pyridoxine 5'-phosphate (PNP) or pyridoxamine 5'-phosphate (PMP) into pyridoxal 5'-phosphate (PLP).</text>
</comment>
<comment type="catalytic activity">
    <reaction evidence="1">
        <text>pyridoxamine 5'-phosphate + O2 + H2O = pyridoxal 5'-phosphate + H2O2 + NH4(+)</text>
        <dbReference type="Rhea" id="RHEA:15817"/>
        <dbReference type="ChEBI" id="CHEBI:15377"/>
        <dbReference type="ChEBI" id="CHEBI:15379"/>
        <dbReference type="ChEBI" id="CHEBI:16240"/>
        <dbReference type="ChEBI" id="CHEBI:28938"/>
        <dbReference type="ChEBI" id="CHEBI:58451"/>
        <dbReference type="ChEBI" id="CHEBI:597326"/>
        <dbReference type="EC" id="1.4.3.5"/>
    </reaction>
</comment>
<comment type="catalytic activity">
    <reaction evidence="1">
        <text>pyridoxine 5'-phosphate + O2 = pyridoxal 5'-phosphate + H2O2</text>
        <dbReference type="Rhea" id="RHEA:15149"/>
        <dbReference type="ChEBI" id="CHEBI:15379"/>
        <dbReference type="ChEBI" id="CHEBI:16240"/>
        <dbReference type="ChEBI" id="CHEBI:58589"/>
        <dbReference type="ChEBI" id="CHEBI:597326"/>
        <dbReference type="EC" id="1.4.3.5"/>
    </reaction>
</comment>
<comment type="cofactor">
    <cofactor evidence="1">
        <name>FMN</name>
        <dbReference type="ChEBI" id="CHEBI:58210"/>
    </cofactor>
    <text evidence="1">Binds 1 FMN per subunit.</text>
</comment>
<comment type="pathway">
    <text evidence="1">Cofactor metabolism; pyridoxal 5'-phosphate salvage; pyridoxal 5'-phosphate from pyridoxamine 5'-phosphate: step 1/1.</text>
</comment>
<comment type="pathway">
    <text evidence="1">Cofactor metabolism; pyridoxal 5'-phosphate salvage; pyridoxal 5'-phosphate from pyridoxine 5'-phosphate: step 1/1.</text>
</comment>
<comment type="subunit">
    <text evidence="1">Homodimer.</text>
</comment>
<comment type="similarity">
    <text evidence="1">Belongs to the pyridoxamine 5'-phosphate oxidase family.</text>
</comment>
<name>PDXH_CAUVC</name>